<evidence type="ECO:0000250" key="1"/>
<evidence type="ECO:0000305" key="2"/>
<gene>
    <name type="primary">rsmE</name>
    <name type="ordered locus">jhp_1007</name>
</gene>
<sequence>MRFVYHPLAKEPTLKIEGESYIHLYRSRRIKSASRLDLRNLKDGFLYTYEHAEIAKKHALLRLVGVQPLEIMANKKTHLILSVIEIKNIEKILPFLNQLGVSKLSLFYADFSQRNEKIDSAKLERFQKILIHSCEQCGRSVLMELEAFSNTKEALKAYPKASVLDFNGETLPASADFEKGVIIGPEGGFSEQERGYFKEREIYRIPLDMVLKSESACVFVASIAQI</sequence>
<dbReference type="EC" id="2.1.1.193"/>
<dbReference type="EMBL" id="AE001439">
    <property type="protein sequence ID" value="AAD06587.1"/>
    <property type="molecule type" value="Genomic_DNA"/>
</dbReference>
<dbReference type="PIR" id="C71860">
    <property type="entry name" value="C71860"/>
</dbReference>
<dbReference type="RefSeq" id="WP_001213128.1">
    <property type="nucleotide sequence ID" value="NC_000921.1"/>
</dbReference>
<dbReference type="SMR" id="Q9ZKD2"/>
<dbReference type="KEGG" id="hpj:jhp_1007"/>
<dbReference type="PATRIC" id="fig|85963.30.peg.1583"/>
<dbReference type="eggNOG" id="COG1385">
    <property type="taxonomic scope" value="Bacteria"/>
</dbReference>
<dbReference type="Proteomes" id="UP000000804">
    <property type="component" value="Chromosome"/>
</dbReference>
<dbReference type="GO" id="GO:0005737">
    <property type="term" value="C:cytoplasm"/>
    <property type="evidence" value="ECO:0007669"/>
    <property type="project" value="UniProtKB-SubCell"/>
</dbReference>
<dbReference type="GO" id="GO:0070042">
    <property type="term" value="F:rRNA (uridine-N3-)-methyltransferase activity"/>
    <property type="evidence" value="ECO:0007669"/>
    <property type="project" value="TreeGrafter"/>
</dbReference>
<dbReference type="GO" id="GO:0070475">
    <property type="term" value="P:rRNA base methylation"/>
    <property type="evidence" value="ECO:0007669"/>
    <property type="project" value="TreeGrafter"/>
</dbReference>
<dbReference type="CDD" id="cd18084">
    <property type="entry name" value="RsmE-like"/>
    <property type="match status" value="1"/>
</dbReference>
<dbReference type="FunFam" id="3.40.1280.10:FF:000049">
    <property type="entry name" value="Ribosomal RNA small subunit methyltransferase E"/>
    <property type="match status" value="1"/>
</dbReference>
<dbReference type="Gene3D" id="3.40.1280.10">
    <property type="match status" value="1"/>
</dbReference>
<dbReference type="InterPro" id="IPR029028">
    <property type="entry name" value="Alpha/beta_knot_MTases"/>
</dbReference>
<dbReference type="InterPro" id="IPR006700">
    <property type="entry name" value="RsmE"/>
</dbReference>
<dbReference type="InterPro" id="IPR046886">
    <property type="entry name" value="RsmE_MTase_dom"/>
</dbReference>
<dbReference type="InterPro" id="IPR046887">
    <property type="entry name" value="RsmE_PUA-like"/>
</dbReference>
<dbReference type="InterPro" id="IPR029026">
    <property type="entry name" value="tRNA_m1G_MTases_N"/>
</dbReference>
<dbReference type="NCBIfam" id="NF008695">
    <property type="entry name" value="PRK11713.3-3"/>
    <property type="match status" value="1"/>
</dbReference>
<dbReference type="NCBIfam" id="TIGR00046">
    <property type="entry name" value="RsmE family RNA methyltransferase"/>
    <property type="match status" value="1"/>
</dbReference>
<dbReference type="PANTHER" id="PTHR30027:SF3">
    <property type="entry name" value="16S RRNA (URACIL(1498)-N(3))-METHYLTRANSFERASE"/>
    <property type="match status" value="1"/>
</dbReference>
<dbReference type="PANTHER" id="PTHR30027">
    <property type="entry name" value="RIBOSOMAL RNA SMALL SUBUNIT METHYLTRANSFERASE E"/>
    <property type="match status" value="1"/>
</dbReference>
<dbReference type="Pfam" id="PF04452">
    <property type="entry name" value="Methyltrans_RNA"/>
    <property type="match status" value="1"/>
</dbReference>
<dbReference type="Pfam" id="PF20260">
    <property type="entry name" value="PUA_4"/>
    <property type="match status" value="1"/>
</dbReference>
<dbReference type="PIRSF" id="PIRSF015601">
    <property type="entry name" value="MTase_slr0722"/>
    <property type="match status" value="1"/>
</dbReference>
<dbReference type="SUPFAM" id="SSF75217">
    <property type="entry name" value="alpha/beta knot"/>
    <property type="match status" value="1"/>
</dbReference>
<organism>
    <name type="scientific">Helicobacter pylori (strain J99 / ATCC 700824)</name>
    <name type="common">Campylobacter pylori J99</name>
    <dbReference type="NCBI Taxonomy" id="85963"/>
    <lineage>
        <taxon>Bacteria</taxon>
        <taxon>Pseudomonadati</taxon>
        <taxon>Campylobacterota</taxon>
        <taxon>Epsilonproteobacteria</taxon>
        <taxon>Campylobacterales</taxon>
        <taxon>Helicobacteraceae</taxon>
        <taxon>Helicobacter</taxon>
    </lineage>
</organism>
<keyword id="KW-0963">Cytoplasm</keyword>
<keyword id="KW-0489">Methyltransferase</keyword>
<keyword id="KW-0698">rRNA processing</keyword>
<keyword id="KW-0949">S-adenosyl-L-methionine</keyword>
<keyword id="KW-0808">Transferase</keyword>
<feature type="chain" id="PRO_0000176211" description="Ribosomal RNA small subunit methyltransferase E">
    <location>
        <begin position="1"/>
        <end position="226"/>
    </location>
</feature>
<comment type="function">
    <text evidence="1">Specifically methylates the N3 position of the uracil ring of uridine 1498 (m3U1498) in 16S rRNA. Acts on the fully assembled 30S ribosomal subunit (By similarity).</text>
</comment>
<comment type="catalytic activity">
    <reaction>
        <text>uridine(1498) in 16S rRNA + S-adenosyl-L-methionine = N(3)-methyluridine(1498) in 16S rRNA + S-adenosyl-L-homocysteine + H(+)</text>
        <dbReference type="Rhea" id="RHEA:42920"/>
        <dbReference type="Rhea" id="RHEA-COMP:10283"/>
        <dbReference type="Rhea" id="RHEA-COMP:10284"/>
        <dbReference type="ChEBI" id="CHEBI:15378"/>
        <dbReference type="ChEBI" id="CHEBI:57856"/>
        <dbReference type="ChEBI" id="CHEBI:59789"/>
        <dbReference type="ChEBI" id="CHEBI:65315"/>
        <dbReference type="ChEBI" id="CHEBI:74502"/>
        <dbReference type="EC" id="2.1.1.193"/>
    </reaction>
</comment>
<comment type="subcellular location">
    <subcellularLocation>
        <location evidence="1">Cytoplasm</location>
    </subcellularLocation>
</comment>
<comment type="similarity">
    <text evidence="2">Belongs to the RNA methyltransferase RsmE family.</text>
</comment>
<accession>Q9ZKD2</accession>
<proteinExistence type="inferred from homology"/>
<protein>
    <recommendedName>
        <fullName>Ribosomal RNA small subunit methyltransferase E</fullName>
        <ecNumber>2.1.1.193</ecNumber>
    </recommendedName>
    <alternativeName>
        <fullName>16S rRNA m3U1498 methyltransferase</fullName>
    </alternativeName>
</protein>
<reference key="1">
    <citation type="journal article" date="1999" name="Nature">
        <title>Genomic sequence comparison of two unrelated isolates of the human gastric pathogen Helicobacter pylori.</title>
        <authorList>
            <person name="Alm R.A."/>
            <person name="Ling L.-S.L."/>
            <person name="Moir D.T."/>
            <person name="King B.L."/>
            <person name="Brown E.D."/>
            <person name="Doig P.C."/>
            <person name="Smith D.R."/>
            <person name="Noonan B."/>
            <person name="Guild B.C."/>
            <person name="deJonge B.L."/>
            <person name="Carmel G."/>
            <person name="Tummino P.J."/>
            <person name="Caruso A."/>
            <person name="Uria-Nickelsen M."/>
            <person name="Mills D.M."/>
            <person name="Ives C."/>
            <person name="Gibson R."/>
            <person name="Merberg D."/>
            <person name="Mills S.D."/>
            <person name="Jiang Q."/>
            <person name="Taylor D.E."/>
            <person name="Vovis G.F."/>
            <person name="Trust T.J."/>
        </authorList>
    </citation>
    <scope>NUCLEOTIDE SEQUENCE [LARGE SCALE GENOMIC DNA]</scope>
    <source>
        <strain>J99 / ATCC 700824</strain>
    </source>
</reference>
<name>RSME_HELPJ</name>